<reference key="1">
    <citation type="journal article" date="2004" name="Syst. Bot.">
        <title>Molecular phylogenetics of core Brassicales, placement of orphan genera, Emblingia, Forchhammeria, Tirania, and character evolution.</title>
        <authorList>
            <person name="Hall J.C."/>
            <person name="Iltis H.H."/>
            <person name="Sytsma K.J."/>
        </authorList>
        <dbReference type="AGRICOLA" id="IND43653588"/>
    </citation>
    <scope>NUCLEOTIDE SEQUENCE [GENOMIC DNA]</scope>
</reference>
<sequence>MEKFQGYLEFDGARQQSFLYPLFFREYIYVLAYDHGLNRLNRNRSIFLENADYDKKYSSLIVKRLILRMYEQNRLIIPTKDLNKNLGHTNLFYYQMISVLFAVIVEIPFSLRLGSSVEGKKLKKSSNLQSIHSIFPFLEDKFSHFNYVLDVLIPYPIHLEILVQTLRYRVKDASSLHFFRFCLYEYCNWKNFDSKKKSILNPRFLLFLYNSHVCEYESIFLFLRKRSSHLRSTSYEVFFERILFYGKIQHFLKVFINNFPSILGLFKDPFLHYVRYHGKCILATKDTPLLMNKWKYYFVNLWQCYFFVWFKSQRVNINQLSKDNLKFLGYLSSLRLNPLVDRSQMLENSFLIDNVRIKLDSKIPIYSIIGSLAKNKFCNVLGHPISKATWTDSSDSDILNRFVRICRNISHYYSGSSKKKNLYRIKYILRLCCVKTLARKHKSTVRAFLKRLGSGLLEEFLTGEDQVLSLIFPRSDYASKRLYRVRVWYLDILYLNDLVNHE</sequence>
<accession>Q5VH43</accession>
<gene>
    <name evidence="1" type="primary">matK</name>
</gene>
<feature type="chain" id="PRO_0000143723" description="Maturase K">
    <location>
        <begin position="1"/>
        <end position="502"/>
    </location>
</feature>
<proteinExistence type="inferred from homology"/>
<name>MATK_STAPI</name>
<evidence type="ECO:0000255" key="1">
    <source>
        <dbReference type="HAMAP-Rule" id="MF_01390"/>
    </source>
</evidence>
<keyword id="KW-0150">Chloroplast</keyword>
<keyword id="KW-0507">mRNA processing</keyword>
<keyword id="KW-0934">Plastid</keyword>
<keyword id="KW-0694">RNA-binding</keyword>
<keyword id="KW-0819">tRNA processing</keyword>
<organism>
    <name type="scientific">Stanleya pinnata</name>
    <name type="common">Prince's plume</name>
    <name type="synonym">Cleome pinnata</name>
    <dbReference type="NCBI Taxonomy" id="72662"/>
    <lineage>
        <taxon>Eukaryota</taxon>
        <taxon>Viridiplantae</taxon>
        <taxon>Streptophyta</taxon>
        <taxon>Embryophyta</taxon>
        <taxon>Tracheophyta</taxon>
        <taxon>Spermatophyta</taxon>
        <taxon>Magnoliopsida</taxon>
        <taxon>eudicotyledons</taxon>
        <taxon>Gunneridae</taxon>
        <taxon>Pentapetalae</taxon>
        <taxon>rosids</taxon>
        <taxon>malvids</taxon>
        <taxon>Brassicales</taxon>
        <taxon>Brassicaceae</taxon>
        <taxon>Thelypodieae</taxon>
        <taxon>Stanleya</taxon>
    </lineage>
</organism>
<protein>
    <recommendedName>
        <fullName evidence="1">Maturase K</fullName>
    </recommendedName>
    <alternativeName>
        <fullName evidence="1">Intron maturase</fullName>
    </alternativeName>
</protein>
<geneLocation type="chloroplast"/>
<comment type="function">
    <text evidence="1">Usually encoded in the trnK tRNA gene intron. Probably assists in splicing its own and other chloroplast group II introns.</text>
</comment>
<comment type="subcellular location">
    <subcellularLocation>
        <location>Plastid</location>
        <location>Chloroplast</location>
    </subcellularLocation>
</comment>
<comment type="similarity">
    <text evidence="1">Belongs to the intron maturase 2 family. MatK subfamily.</text>
</comment>
<dbReference type="EMBL" id="AY483226">
    <property type="protein sequence ID" value="AAS77361.1"/>
    <property type="molecule type" value="Genomic_DNA"/>
</dbReference>
<dbReference type="GO" id="GO:0009507">
    <property type="term" value="C:chloroplast"/>
    <property type="evidence" value="ECO:0007669"/>
    <property type="project" value="UniProtKB-SubCell"/>
</dbReference>
<dbReference type="GO" id="GO:0003723">
    <property type="term" value="F:RNA binding"/>
    <property type="evidence" value="ECO:0007669"/>
    <property type="project" value="UniProtKB-KW"/>
</dbReference>
<dbReference type="GO" id="GO:0006397">
    <property type="term" value="P:mRNA processing"/>
    <property type="evidence" value="ECO:0007669"/>
    <property type="project" value="UniProtKB-KW"/>
</dbReference>
<dbReference type="GO" id="GO:0008380">
    <property type="term" value="P:RNA splicing"/>
    <property type="evidence" value="ECO:0007669"/>
    <property type="project" value="UniProtKB-UniRule"/>
</dbReference>
<dbReference type="GO" id="GO:0008033">
    <property type="term" value="P:tRNA processing"/>
    <property type="evidence" value="ECO:0007669"/>
    <property type="project" value="UniProtKB-KW"/>
</dbReference>
<dbReference type="HAMAP" id="MF_01390">
    <property type="entry name" value="MatK"/>
    <property type="match status" value="1"/>
</dbReference>
<dbReference type="InterPro" id="IPR024937">
    <property type="entry name" value="Domain_X"/>
</dbReference>
<dbReference type="InterPro" id="IPR002866">
    <property type="entry name" value="Maturase_MatK"/>
</dbReference>
<dbReference type="InterPro" id="IPR024942">
    <property type="entry name" value="Maturase_MatK_N"/>
</dbReference>
<dbReference type="PANTHER" id="PTHR34811">
    <property type="entry name" value="MATURASE K"/>
    <property type="match status" value="1"/>
</dbReference>
<dbReference type="PANTHER" id="PTHR34811:SF1">
    <property type="entry name" value="MATURASE K"/>
    <property type="match status" value="1"/>
</dbReference>
<dbReference type="Pfam" id="PF01348">
    <property type="entry name" value="Intron_maturas2"/>
    <property type="match status" value="1"/>
</dbReference>
<dbReference type="Pfam" id="PF01824">
    <property type="entry name" value="MatK_N"/>
    <property type="match status" value="1"/>
</dbReference>